<organism>
    <name type="scientific">Xylella fastidiosa (strain Temecula1 / ATCC 700964)</name>
    <dbReference type="NCBI Taxonomy" id="183190"/>
    <lineage>
        <taxon>Bacteria</taxon>
        <taxon>Pseudomonadati</taxon>
        <taxon>Pseudomonadota</taxon>
        <taxon>Gammaproteobacteria</taxon>
        <taxon>Lysobacterales</taxon>
        <taxon>Lysobacteraceae</taxon>
        <taxon>Xylella</taxon>
    </lineage>
</organism>
<name>RLMN_XYLFT</name>
<feature type="chain" id="PRO_0000350536" description="Dual-specificity RNA methyltransferase RlmN">
    <location>
        <begin position="1"/>
        <end position="406"/>
    </location>
</feature>
<feature type="domain" description="Radical SAM core" evidence="2">
    <location>
        <begin position="125"/>
        <end position="370"/>
    </location>
</feature>
<feature type="active site" description="Proton acceptor" evidence="1">
    <location>
        <position position="119"/>
    </location>
</feature>
<feature type="active site" description="S-methylcysteine intermediate" evidence="1">
    <location>
        <position position="375"/>
    </location>
</feature>
<feature type="binding site" evidence="1">
    <location>
        <position position="139"/>
    </location>
    <ligand>
        <name>[4Fe-4S] cluster</name>
        <dbReference type="ChEBI" id="CHEBI:49883"/>
        <note>4Fe-4S-S-AdoMet</note>
    </ligand>
</feature>
<feature type="binding site" evidence="1">
    <location>
        <position position="143"/>
    </location>
    <ligand>
        <name>[4Fe-4S] cluster</name>
        <dbReference type="ChEBI" id="CHEBI:49883"/>
        <note>4Fe-4S-S-AdoMet</note>
    </ligand>
</feature>
<feature type="binding site" evidence="1">
    <location>
        <position position="146"/>
    </location>
    <ligand>
        <name>[4Fe-4S] cluster</name>
        <dbReference type="ChEBI" id="CHEBI:49883"/>
        <note>4Fe-4S-S-AdoMet</note>
    </ligand>
</feature>
<feature type="binding site" evidence="1">
    <location>
        <begin position="192"/>
        <end position="193"/>
    </location>
    <ligand>
        <name>S-adenosyl-L-methionine</name>
        <dbReference type="ChEBI" id="CHEBI:59789"/>
    </ligand>
</feature>
<feature type="binding site" evidence="1">
    <location>
        <position position="224"/>
    </location>
    <ligand>
        <name>S-adenosyl-L-methionine</name>
        <dbReference type="ChEBI" id="CHEBI:59789"/>
    </ligand>
</feature>
<feature type="binding site" evidence="1">
    <location>
        <begin position="246"/>
        <end position="248"/>
    </location>
    <ligand>
        <name>S-adenosyl-L-methionine</name>
        <dbReference type="ChEBI" id="CHEBI:59789"/>
    </ligand>
</feature>
<feature type="binding site" evidence="1">
    <location>
        <position position="332"/>
    </location>
    <ligand>
        <name>S-adenosyl-L-methionine</name>
        <dbReference type="ChEBI" id="CHEBI:59789"/>
    </ligand>
</feature>
<feature type="disulfide bond" description="(transient)" evidence="1">
    <location>
        <begin position="132"/>
        <end position="375"/>
    </location>
</feature>
<reference key="1">
    <citation type="journal article" date="2003" name="J. Bacteriol.">
        <title>Comparative analyses of the complete genome sequences of Pierce's disease and citrus variegated chlorosis strains of Xylella fastidiosa.</title>
        <authorList>
            <person name="Van Sluys M.A."/>
            <person name="de Oliveira M.C."/>
            <person name="Monteiro-Vitorello C.B."/>
            <person name="Miyaki C.Y."/>
            <person name="Furlan L.R."/>
            <person name="Camargo L.E.A."/>
            <person name="da Silva A.C.R."/>
            <person name="Moon D.H."/>
            <person name="Takita M.A."/>
            <person name="Lemos E.G.M."/>
            <person name="Machado M.A."/>
            <person name="Ferro M.I.T."/>
            <person name="da Silva F.R."/>
            <person name="Goldman M.H.S."/>
            <person name="Goldman G.H."/>
            <person name="Lemos M.V.F."/>
            <person name="El-Dorry H."/>
            <person name="Tsai S.M."/>
            <person name="Carrer H."/>
            <person name="Carraro D.M."/>
            <person name="de Oliveira R.C."/>
            <person name="Nunes L.R."/>
            <person name="Siqueira W.J."/>
            <person name="Coutinho L.L."/>
            <person name="Kimura E.T."/>
            <person name="Ferro E.S."/>
            <person name="Harakava R."/>
            <person name="Kuramae E.E."/>
            <person name="Marino C.L."/>
            <person name="Giglioti E."/>
            <person name="Abreu I.L."/>
            <person name="Alves L.M.C."/>
            <person name="do Amaral A.M."/>
            <person name="Baia G.S."/>
            <person name="Blanco S.R."/>
            <person name="Brito M.S."/>
            <person name="Cannavan F.S."/>
            <person name="Celestino A.V."/>
            <person name="da Cunha A.F."/>
            <person name="Fenille R.C."/>
            <person name="Ferro J.A."/>
            <person name="Formighieri E.F."/>
            <person name="Kishi L.T."/>
            <person name="Leoni S.G."/>
            <person name="Oliveira A.R."/>
            <person name="Rosa V.E. Jr."/>
            <person name="Sassaki F.T."/>
            <person name="Sena J.A.D."/>
            <person name="de Souza A.A."/>
            <person name="Truffi D."/>
            <person name="Tsukumo F."/>
            <person name="Yanai G.M."/>
            <person name="Zaros L.G."/>
            <person name="Civerolo E.L."/>
            <person name="Simpson A.J.G."/>
            <person name="Almeida N.F. Jr."/>
            <person name="Setubal J.C."/>
            <person name="Kitajima J.P."/>
        </authorList>
    </citation>
    <scope>NUCLEOTIDE SEQUENCE [LARGE SCALE GENOMIC DNA]</scope>
    <source>
        <strain>Temecula1 / ATCC 700964</strain>
    </source>
</reference>
<proteinExistence type="inferred from homology"/>
<keyword id="KW-0004">4Fe-4S</keyword>
<keyword id="KW-0963">Cytoplasm</keyword>
<keyword id="KW-1015">Disulfide bond</keyword>
<keyword id="KW-0408">Iron</keyword>
<keyword id="KW-0411">Iron-sulfur</keyword>
<keyword id="KW-0479">Metal-binding</keyword>
<keyword id="KW-0489">Methyltransferase</keyword>
<keyword id="KW-1185">Reference proteome</keyword>
<keyword id="KW-0698">rRNA processing</keyword>
<keyword id="KW-0949">S-adenosyl-L-methionine</keyword>
<keyword id="KW-0808">Transferase</keyword>
<keyword id="KW-0819">tRNA processing</keyword>
<comment type="function">
    <text evidence="1">Specifically methylates position 2 of adenine 2503 in 23S rRNA and position 2 of adenine 37 in tRNAs. m2A2503 modification seems to play a crucial role in the proofreading step occurring at the peptidyl transferase center and thus would serve to optimize ribosomal fidelity.</text>
</comment>
<comment type="catalytic activity">
    <reaction evidence="1">
        <text>adenosine(2503) in 23S rRNA + 2 reduced [2Fe-2S]-[ferredoxin] + 2 S-adenosyl-L-methionine = 2-methyladenosine(2503) in 23S rRNA + 5'-deoxyadenosine + L-methionine + 2 oxidized [2Fe-2S]-[ferredoxin] + S-adenosyl-L-homocysteine</text>
        <dbReference type="Rhea" id="RHEA:42916"/>
        <dbReference type="Rhea" id="RHEA-COMP:10000"/>
        <dbReference type="Rhea" id="RHEA-COMP:10001"/>
        <dbReference type="Rhea" id="RHEA-COMP:10152"/>
        <dbReference type="Rhea" id="RHEA-COMP:10282"/>
        <dbReference type="ChEBI" id="CHEBI:17319"/>
        <dbReference type="ChEBI" id="CHEBI:33737"/>
        <dbReference type="ChEBI" id="CHEBI:33738"/>
        <dbReference type="ChEBI" id="CHEBI:57844"/>
        <dbReference type="ChEBI" id="CHEBI:57856"/>
        <dbReference type="ChEBI" id="CHEBI:59789"/>
        <dbReference type="ChEBI" id="CHEBI:74411"/>
        <dbReference type="ChEBI" id="CHEBI:74497"/>
        <dbReference type="EC" id="2.1.1.192"/>
    </reaction>
</comment>
<comment type="catalytic activity">
    <reaction evidence="1">
        <text>adenosine(37) in tRNA + 2 reduced [2Fe-2S]-[ferredoxin] + 2 S-adenosyl-L-methionine = 2-methyladenosine(37) in tRNA + 5'-deoxyadenosine + L-methionine + 2 oxidized [2Fe-2S]-[ferredoxin] + S-adenosyl-L-homocysteine</text>
        <dbReference type="Rhea" id="RHEA:43332"/>
        <dbReference type="Rhea" id="RHEA-COMP:10000"/>
        <dbReference type="Rhea" id="RHEA-COMP:10001"/>
        <dbReference type="Rhea" id="RHEA-COMP:10162"/>
        <dbReference type="Rhea" id="RHEA-COMP:10485"/>
        <dbReference type="ChEBI" id="CHEBI:17319"/>
        <dbReference type="ChEBI" id="CHEBI:33737"/>
        <dbReference type="ChEBI" id="CHEBI:33738"/>
        <dbReference type="ChEBI" id="CHEBI:57844"/>
        <dbReference type="ChEBI" id="CHEBI:57856"/>
        <dbReference type="ChEBI" id="CHEBI:59789"/>
        <dbReference type="ChEBI" id="CHEBI:74411"/>
        <dbReference type="ChEBI" id="CHEBI:74497"/>
        <dbReference type="EC" id="2.1.1.192"/>
    </reaction>
</comment>
<comment type="cofactor">
    <cofactor evidence="1">
        <name>[4Fe-4S] cluster</name>
        <dbReference type="ChEBI" id="CHEBI:49883"/>
    </cofactor>
    <text evidence="1">Binds 1 [4Fe-4S] cluster. The cluster is coordinated with 3 cysteines and an exchangeable S-adenosyl-L-methionine.</text>
</comment>
<comment type="subcellular location">
    <subcellularLocation>
        <location evidence="1">Cytoplasm</location>
    </subcellularLocation>
</comment>
<comment type="miscellaneous">
    <text evidence="1">Reaction proceeds by a ping-pong mechanism involving intermediate methylation of a conserved cysteine residue.</text>
</comment>
<comment type="similarity">
    <text evidence="1">Belongs to the radical SAM superfamily. RlmN family.</text>
</comment>
<gene>
    <name evidence="1" type="primary">rlmN</name>
    <name type="ordered locus">PD_1624</name>
</gene>
<protein>
    <recommendedName>
        <fullName evidence="1">Dual-specificity RNA methyltransferase RlmN</fullName>
        <ecNumber evidence="1">2.1.1.192</ecNumber>
    </recommendedName>
    <alternativeName>
        <fullName evidence="1">23S rRNA (adenine(2503)-C(2))-methyltransferase</fullName>
    </alternativeName>
    <alternativeName>
        <fullName evidence="1">23S rRNA m2A2503 methyltransferase</fullName>
    </alternativeName>
    <alternativeName>
        <fullName evidence="1">Ribosomal RNA large subunit methyltransferase N</fullName>
    </alternativeName>
    <alternativeName>
        <fullName evidence="1">tRNA (adenine(37)-C(2))-methyltransferase</fullName>
    </alternativeName>
    <alternativeName>
        <fullName evidence="1">tRNA m2A37 methyltransferase</fullName>
    </alternativeName>
</protein>
<accession>Q87B36</accession>
<dbReference type="EC" id="2.1.1.192" evidence="1"/>
<dbReference type="EMBL" id="AE009442">
    <property type="protein sequence ID" value="AAO29464.1"/>
    <property type="molecule type" value="Genomic_DNA"/>
</dbReference>
<dbReference type="RefSeq" id="WP_004089782.1">
    <property type="nucleotide sequence ID" value="NC_004556.1"/>
</dbReference>
<dbReference type="SMR" id="Q87B36"/>
<dbReference type="GeneID" id="93905458"/>
<dbReference type="KEGG" id="xft:PD_1624"/>
<dbReference type="HOGENOM" id="CLU_029101_0_0_6"/>
<dbReference type="Proteomes" id="UP000002516">
    <property type="component" value="Chromosome"/>
</dbReference>
<dbReference type="GO" id="GO:0005737">
    <property type="term" value="C:cytoplasm"/>
    <property type="evidence" value="ECO:0007669"/>
    <property type="project" value="UniProtKB-SubCell"/>
</dbReference>
<dbReference type="GO" id="GO:0051539">
    <property type="term" value="F:4 iron, 4 sulfur cluster binding"/>
    <property type="evidence" value="ECO:0007669"/>
    <property type="project" value="UniProtKB-UniRule"/>
</dbReference>
<dbReference type="GO" id="GO:0046872">
    <property type="term" value="F:metal ion binding"/>
    <property type="evidence" value="ECO:0007669"/>
    <property type="project" value="UniProtKB-KW"/>
</dbReference>
<dbReference type="GO" id="GO:0070040">
    <property type="term" value="F:rRNA (adenine(2503)-C2-)-methyltransferase activity"/>
    <property type="evidence" value="ECO:0007669"/>
    <property type="project" value="UniProtKB-UniRule"/>
</dbReference>
<dbReference type="GO" id="GO:0019843">
    <property type="term" value="F:rRNA binding"/>
    <property type="evidence" value="ECO:0007669"/>
    <property type="project" value="UniProtKB-UniRule"/>
</dbReference>
<dbReference type="GO" id="GO:0002935">
    <property type="term" value="F:tRNA (adenine(37)-C2)-methyltransferase activity"/>
    <property type="evidence" value="ECO:0007669"/>
    <property type="project" value="UniProtKB-UniRule"/>
</dbReference>
<dbReference type="GO" id="GO:0000049">
    <property type="term" value="F:tRNA binding"/>
    <property type="evidence" value="ECO:0007669"/>
    <property type="project" value="UniProtKB-UniRule"/>
</dbReference>
<dbReference type="GO" id="GO:0070475">
    <property type="term" value="P:rRNA base methylation"/>
    <property type="evidence" value="ECO:0007669"/>
    <property type="project" value="UniProtKB-UniRule"/>
</dbReference>
<dbReference type="GO" id="GO:0030488">
    <property type="term" value="P:tRNA methylation"/>
    <property type="evidence" value="ECO:0007669"/>
    <property type="project" value="UniProtKB-UniRule"/>
</dbReference>
<dbReference type="CDD" id="cd01335">
    <property type="entry name" value="Radical_SAM"/>
    <property type="match status" value="1"/>
</dbReference>
<dbReference type="FunFam" id="1.10.150.530:FF:000003">
    <property type="entry name" value="Dual-specificity RNA methyltransferase RlmN"/>
    <property type="match status" value="1"/>
</dbReference>
<dbReference type="FunFam" id="3.20.20.70:FF:000008">
    <property type="entry name" value="Dual-specificity RNA methyltransferase RlmN"/>
    <property type="match status" value="1"/>
</dbReference>
<dbReference type="Gene3D" id="1.10.150.530">
    <property type="match status" value="1"/>
</dbReference>
<dbReference type="Gene3D" id="3.20.20.70">
    <property type="entry name" value="Aldolase class I"/>
    <property type="match status" value="1"/>
</dbReference>
<dbReference type="HAMAP" id="MF_01849">
    <property type="entry name" value="RNA_methyltr_RlmN"/>
    <property type="match status" value="1"/>
</dbReference>
<dbReference type="InterPro" id="IPR013785">
    <property type="entry name" value="Aldolase_TIM"/>
</dbReference>
<dbReference type="InterPro" id="IPR040072">
    <property type="entry name" value="Methyltransferase_A"/>
</dbReference>
<dbReference type="InterPro" id="IPR048641">
    <property type="entry name" value="RlmN_N"/>
</dbReference>
<dbReference type="InterPro" id="IPR027492">
    <property type="entry name" value="RNA_MTrfase_RlmN"/>
</dbReference>
<dbReference type="InterPro" id="IPR004383">
    <property type="entry name" value="rRNA_lsu_MTrfase_RlmN/Cfr"/>
</dbReference>
<dbReference type="InterPro" id="IPR007197">
    <property type="entry name" value="rSAM"/>
</dbReference>
<dbReference type="NCBIfam" id="TIGR00048">
    <property type="entry name" value="rRNA_mod_RlmN"/>
    <property type="match status" value="1"/>
</dbReference>
<dbReference type="PANTHER" id="PTHR30544">
    <property type="entry name" value="23S RRNA METHYLTRANSFERASE"/>
    <property type="match status" value="1"/>
</dbReference>
<dbReference type="PANTHER" id="PTHR30544:SF5">
    <property type="entry name" value="RADICAL SAM CORE DOMAIN-CONTAINING PROTEIN"/>
    <property type="match status" value="1"/>
</dbReference>
<dbReference type="Pfam" id="PF04055">
    <property type="entry name" value="Radical_SAM"/>
    <property type="match status" value="1"/>
</dbReference>
<dbReference type="Pfam" id="PF21016">
    <property type="entry name" value="RlmN_N"/>
    <property type="match status" value="1"/>
</dbReference>
<dbReference type="PIRSF" id="PIRSF006004">
    <property type="entry name" value="CHP00048"/>
    <property type="match status" value="1"/>
</dbReference>
<dbReference type="SFLD" id="SFLDF00275">
    <property type="entry name" value="adenosine_C2_methyltransferase"/>
    <property type="match status" value="1"/>
</dbReference>
<dbReference type="SFLD" id="SFLDS00029">
    <property type="entry name" value="Radical_SAM"/>
    <property type="match status" value="1"/>
</dbReference>
<dbReference type="SUPFAM" id="SSF102114">
    <property type="entry name" value="Radical SAM enzymes"/>
    <property type="match status" value="1"/>
</dbReference>
<dbReference type="PROSITE" id="PS51918">
    <property type="entry name" value="RADICAL_SAM"/>
    <property type="match status" value="1"/>
</dbReference>
<sequence>MNGFAVIPSVTTTTTSGEPIASDVARKQNLLELDREGLERFFEDVLGEKRYRAHQVMKWIHHRYVADFEQMTDVGKALRTRLQACAEVRVPRVVFDKHSADGTHKWLLAMGTDRKNAIETVYIPDKGRGTLCVSSQIGCGLNCTFCSTATQGFNRNLTTAEIIGQVWVAARHLGNVPHQQRRLTNVVMMGMGEPLMNFDNVVRAMSVMRDDLGYGLSNKRVTLSTSGLVPMIDRLSTESDVSLAVSLHAPNDKLREQLVPLNKKYPIVELMASCERYLSVNRKRDSVTFEYTLMKGVNDKQEHAHELAKLMRQFDCAMQVKGAAKVNLIPFNPFPGTCYERSTEVDIRAFQKILLDAQILAMVRRTRGDDIDAACGQLKGQVVDRTRRQAEFRRTIEDRVGRDVAA</sequence>
<evidence type="ECO:0000255" key="1">
    <source>
        <dbReference type="HAMAP-Rule" id="MF_01849"/>
    </source>
</evidence>
<evidence type="ECO:0000255" key="2">
    <source>
        <dbReference type="PROSITE-ProRule" id="PRU01266"/>
    </source>
</evidence>